<feature type="signal peptide" evidence="2">
    <location>
        <begin position="1"/>
        <end position="25"/>
    </location>
</feature>
<feature type="chain" id="PRO_0000394086" description="Probable exo-1,4-beta-xylosidase bxlB">
    <location>
        <begin position="26"/>
        <end position="771"/>
    </location>
</feature>
<feature type="active site" evidence="1">
    <location>
        <position position="293"/>
    </location>
</feature>
<feature type="glycosylation site" description="N-linked (GlcNAc...) asparagine" evidence="2">
    <location>
        <position position="67"/>
    </location>
</feature>
<feature type="glycosylation site" description="N-linked (GlcNAc...) asparagine" evidence="2">
    <location>
        <position position="305"/>
    </location>
</feature>
<feature type="glycosylation site" description="N-linked (GlcNAc...) asparagine" evidence="2">
    <location>
        <position position="345"/>
    </location>
</feature>
<feature type="glycosylation site" description="N-linked (GlcNAc...) asparagine" evidence="2">
    <location>
        <position position="423"/>
    </location>
</feature>
<feature type="glycosylation site" description="N-linked (GlcNAc...) asparagine" evidence="2">
    <location>
        <position position="464"/>
    </location>
</feature>
<sequence>MAHITSWHYGNAIALLVSLAPGALSLNTFPDCSSGPLSKLAVCDTSLDVTTRAQSLVNAMTFEEKVNNTQYNSPGVPRLGLPAYNWWSEALHGVAGSPGVEFADSGPFSYATSFPQPILLGATFDDDLIKQVATVVSTEGRAFGNAGRSGLDFWTPNINPFRDARWGRGQETPGEDPLHVSRYVYHLVDGLQNGIGPANPKVVATCKHFAAYDLEDWNGVVRHSFNAEVSTQDLSEFYLPPFKSCARDARVDAVMCSYNALNGVPACADSYLLQTILREHWKWDEPGRWITSDCGAIDDIYNGHNFTTTPAEAAATALNAGTDLDCGTVFPKYLGQAADEGLYSNQTLDRALVRLYSSLVKLGYFDPAEDQPYRSIGWTDVDTPAAEALAHKAAGEGIVLLKNDKTLPLKAKGTLALIGPYANATKQMQGNYEGPAKYIRTLLWAATQAGYDVKYAAGTAINTNSTAGFDAALSAAKQADVVVYAGGIDNTIEAEGRDRTTIAWPGNQVNLIDQLSKIGKPLVVVQFGGGQVDDSSLLSNPRVNALLWAGYPSQEGGSAIFDILTGKTAPAGRLPVTQYPADYVNQVPMTDMALRPGSNTPGRTYRWYDKAVLPFGFGLHYTTFKISWPRRALGPYNTAALVSRSPKNVPIDRAAFDTFHIQVTNTGKTTSDYVALLFLKTTDAGPKPYPLKTLVGYTRAKQIKPGEKRSVDIEVSLGSLARTAENGDLVLYPGRYTLEVDVGESQYPTASFTVTGKETILDSFPQPPKTR</sequence>
<gene>
    <name type="primary">bxlB</name>
    <name type="ORF">AFUB_046310</name>
</gene>
<name>BXLB_ASPFC</name>
<comment type="function">
    <text evidence="1">Xylan 1,4-beta-xylosidase involved in the hydrolysis of xylan, a major structural heterogeneous polysaccharide found in plant biomass representing the second most abundant polysaccharide in the biosphere, after cellulose.</text>
</comment>
<comment type="catalytic activity">
    <reaction>
        <text>Hydrolysis of (1-&gt;4)-beta-D-xylans, to remove successive D-xylose residues from the non-reducing termini.</text>
        <dbReference type="EC" id="3.2.1.37"/>
    </reaction>
</comment>
<comment type="pathway">
    <text>Glycan degradation; xylan degradation.</text>
</comment>
<comment type="subcellular location">
    <subcellularLocation>
        <location evidence="1">Secreted</location>
    </subcellularLocation>
</comment>
<comment type="similarity">
    <text evidence="3">Belongs to the glycosyl hydrolase 3 family.</text>
</comment>
<reference key="1">
    <citation type="journal article" date="2008" name="PLoS Genet.">
        <title>Genomic islands in the pathogenic filamentous fungus Aspergillus fumigatus.</title>
        <authorList>
            <person name="Fedorova N.D."/>
            <person name="Khaldi N."/>
            <person name="Joardar V.S."/>
            <person name="Maiti R."/>
            <person name="Amedeo P."/>
            <person name="Anderson M.J."/>
            <person name="Crabtree J."/>
            <person name="Silva J.C."/>
            <person name="Badger J.H."/>
            <person name="Albarraq A."/>
            <person name="Angiuoli S."/>
            <person name="Bussey H."/>
            <person name="Bowyer P."/>
            <person name="Cotty P.J."/>
            <person name="Dyer P.S."/>
            <person name="Egan A."/>
            <person name="Galens K."/>
            <person name="Fraser-Liggett C.M."/>
            <person name="Haas B.J."/>
            <person name="Inman J.M."/>
            <person name="Kent R."/>
            <person name="Lemieux S."/>
            <person name="Malavazi I."/>
            <person name="Orvis J."/>
            <person name="Roemer T."/>
            <person name="Ronning C.M."/>
            <person name="Sundaram J.P."/>
            <person name="Sutton G."/>
            <person name="Turner G."/>
            <person name="Venter J.C."/>
            <person name="White O.R."/>
            <person name="Whitty B.R."/>
            <person name="Youngman P."/>
            <person name="Wolfe K.H."/>
            <person name="Goldman G.H."/>
            <person name="Wortman J.R."/>
            <person name="Jiang B."/>
            <person name="Denning D.W."/>
            <person name="Nierman W.C."/>
        </authorList>
    </citation>
    <scope>NUCLEOTIDE SEQUENCE [LARGE SCALE GENOMIC DNA]</scope>
    <source>
        <strain>CBS 144.89 / FGSC A1163 / CEA10</strain>
    </source>
</reference>
<proteinExistence type="inferred from homology"/>
<organism>
    <name type="scientific">Aspergillus fumigatus (strain CBS 144.89 / FGSC A1163 / CEA10)</name>
    <name type="common">Neosartorya fumigata</name>
    <dbReference type="NCBI Taxonomy" id="451804"/>
    <lineage>
        <taxon>Eukaryota</taxon>
        <taxon>Fungi</taxon>
        <taxon>Dikarya</taxon>
        <taxon>Ascomycota</taxon>
        <taxon>Pezizomycotina</taxon>
        <taxon>Eurotiomycetes</taxon>
        <taxon>Eurotiomycetidae</taxon>
        <taxon>Eurotiales</taxon>
        <taxon>Aspergillaceae</taxon>
        <taxon>Aspergillus</taxon>
        <taxon>Aspergillus subgen. Fumigati</taxon>
    </lineage>
</organism>
<accession>B0Y0I4</accession>
<evidence type="ECO:0000250" key="1"/>
<evidence type="ECO:0000255" key="2"/>
<evidence type="ECO:0000305" key="3"/>
<keyword id="KW-0119">Carbohydrate metabolism</keyword>
<keyword id="KW-0325">Glycoprotein</keyword>
<keyword id="KW-0326">Glycosidase</keyword>
<keyword id="KW-0378">Hydrolase</keyword>
<keyword id="KW-0624">Polysaccharide degradation</keyword>
<keyword id="KW-0964">Secreted</keyword>
<keyword id="KW-0732">Signal</keyword>
<keyword id="KW-0858">Xylan degradation</keyword>
<dbReference type="EC" id="3.2.1.37"/>
<dbReference type="EMBL" id="DS499596">
    <property type="protein sequence ID" value="EDP53454.1"/>
    <property type="molecule type" value="Genomic_DNA"/>
</dbReference>
<dbReference type="SMR" id="B0Y0I4"/>
<dbReference type="GlyCosmos" id="B0Y0I4">
    <property type="glycosylation" value="5 sites, No reported glycans"/>
</dbReference>
<dbReference type="EnsemblFungi" id="EDP53454">
    <property type="protein sequence ID" value="EDP53454"/>
    <property type="gene ID" value="AFUB_046310"/>
</dbReference>
<dbReference type="VEuPathDB" id="FungiDB:AFUB_046310"/>
<dbReference type="HOGENOM" id="CLU_004542_5_3_1"/>
<dbReference type="OrthoDB" id="18116at5052"/>
<dbReference type="PhylomeDB" id="B0Y0I4"/>
<dbReference type="UniPathway" id="UPA00114"/>
<dbReference type="Proteomes" id="UP000001699">
    <property type="component" value="Unassembled WGS sequence"/>
</dbReference>
<dbReference type="GO" id="GO:0005576">
    <property type="term" value="C:extracellular region"/>
    <property type="evidence" value="ECO:0007669"/>
    <property type="project" value="UniProtKB-SubCell"/>
</dbReference>
<dbReference type="GO" id="GO:0046556">
    <property type="term" value="F:alpha-L-arabinofuranosidase activity"/>
    <property type="evidence" value="ECO:0007669"/>
    <property type="project" value="TreeGrafter"/>
</dbReference>
<dbReference type="GO" id="GO:0009044">
    <property type="term" value="F:xylan 1,4-beta-xylosidase activity"/>
    <property type="evidence" value="ECO:0007669"/>
    <property type="project" value="UniProtKB-EC"/>
</dbReference>
<dbReference type="GO" id="GO:0031222">
    <property type="term" value="P:arabinan catabolic process"/>
    <property type="evidence" value="ECO:0007669"/>
    <property type="project" value="TreeGrafter"/>
</dbReference>
<dbReference type="GO" id="GO:0045493">
    <property type="term" value="P:xylan catabolic process"/>
    <property type="evidence" value="ECO:0007669"/>
    <property type="project" value="UniProtKB-UniPathway"/>
</dbReference>
<dbReference type="FunFam" id="2.60.40.10:FF:001420">
    <property type="entry name" value="Exo-1,4-beta-xylosidase xlnD"/>
    <property type="match status" value="1"/>
</dbReference>
<dbReference type="FunFam" id="3.40.50.1700:FF:000007">
    <property type="entry name" value="Exo-1,4-beta-xylosidase xlnD"/>
    <property type="match status" value="1"/>
</dbReference>
<dbReference type="FunFam" id="3.20.20.300:FF:000013">
    <property type="entry name" value="Probable exo-1,4-beta-xylosidase xlnD"/>
    <property type="match status" value="1"/>
</dbReference>
<dbReference type="Gene3D" id="3.40.50.1700">
    <property type="entry name" value="Glycoside hydrolase family 3 C-terminal domain"/>
    <property type="match status" value="1"/>
</dbReference>
<dbReference type="Gene3D" id="3.20.20.300">
    <property type="entry name" value="Glycoside hydrolase, family 3, N-terminal domain"/>
    <property type="match status" value="1"/>
</dbReference>
<dbReference type="Gene3D" id="2.60.40.10">
    <property type="entry name" value="Immunoglobulins"/>
    <property type="match status" value="1"/>
</dbReference>
<dbReference type="InterPro" id="IPR044993">
    <property type="entry name" value="BXL"/>
</dbReference>
<dbReference type="InterPro" id="IPR026891">
    <property type="entry name" value="Fn3-like"/>
</dbReference>
<dbReference type="InterPro" id="IPR002772">
    <property type="entry name" value="Glyco_hydro_3_C"/>
</dbReference>
<dbReference type="InterPro" id="IPR036881">
    <property type="entry name" value="Glyco_hydro_3_C_sf"/>
</dbReference>
<dbReference type="InterPro" id="IPR001764">
    <property type="entry name" value="Glyco_hydro_3_N"/>
</dbReference>
<dbReference type="InterPro" id="IPR036962">
    <property type="entry name" value="Glyco_hydro_3_N_sf"/>
</dbReference>
<dbReference type="InterPro" id="IPR017853">
    <property type="entry name" value="Glycoside_hydrolase_SF"/>
</dbReference>
<dbReference type="InterPro" id="IPR013783">
    <property type="entry name" value="Ig-like_fold"/>
</dbReference>
<dbReference type="PANTHER" id="PTHR42721:SF3">
    <property type="entry name" value="BETA-D-XYLOSIDASE 5-RELATED"/>
    <property type="match status" value="1"/>
</dbReference>
<dbReference type="PANTHER" id="PTHR42721">
    <property type="entry name" value="SUGAR HYDROLASE-RELATED"/>
    <property type="match status" value="1"/>
</dbReference>
<dbReference type="Pfam" id="PF14310">
    <property type="entry name" value="Fn3-like"/>
    <property type="match status" value="1"/>
</dbReference>
<dbReference type="Pfam" id="PF00933">
    <property type="entry name" value="Glyco_hydro_3"/>
    <property type="match status" value="1"/>
</dbReference>
<dbReference type="Pfam" id="PF01915">
    <property type="entry name" value="Glyco_hydro_3_C"/>
    <property type="match status" value="1"/>
</dbReference>
<dbReference type="PRINTS" id="PR00133">
    <property type="entry name" value="GLHYDRLASE3"/>
</dbReference>
<dbReference type="SMART" id="SM01217">
    <property type="entry name" value="Fn3_like"/>
    <property type="match status" value="1"/>
</dbReference>
<dbReference type="SUPFAM" id="SSF51445">
    <property type="entry name" value="(Trans)glycosidases"/>
    <property type="match status" value="1"/>
</dbReference>
<dbReference type="SUPFAM" id="SSF52279">
    <property type="entry name" value="Beta-D-glucan exohydrolase, C-terminal domain"/>
    <property type="match status" value="1"/>
</dbReference>
<protein>
    <recommendedName>
        <fullName>Probable exo-1,4-beta-xylosidase bxlB</fullName>
        <ecNumber>3.2.1.37</ecNumber>
    </recommendedName>
    <alternativeName>
        <fullName>1,4-beta-D-xylan xylohydrolase bxlB</fullName>
    </alternativeName>
    <alternativeName>
        <fullName>Beta-xylosidase bxlB</fullName>
    </alternativeName>
    <alternativeName>
        <fullName>Xylobiase bxlB</fullName>
    </alternativeName>
</protein>